<name>ATPF_CHLAA</name>
<evidence type="ECO:0000250" key="1"/>
<evidence type="ECO:0000255" key="2">
    <source>
        <dbReference type="HAMAP-Rule" id="MF_01398"/>
    </source>
</evidence>
<sequence length="164" mass="18682">MEALGINPTLFIAQLINFLLLIFILRALLYRPVMNLLNERTRRIEESVRDAEKVREQLANARRDYEAEIARARQEAAKIVAQAQERAKQQEAEIIAQARREAERLKEEARAQAEQERIRMLSEAKSQIADLVTLTASRVLGAELQARGHDALIAESLAALDRRN</sequence>
<reference key="1">
    <citation type="journal article" date="2011" name="BMC Genomics">
        <title>Complete genome sequence of the filamentous anoxygenic phototrophic bacterium Chloroflexus aurantiacus.</title>
        <authorList>
            <person name="Tang K.H."/>
            <person name="Barry K."/>
            <person name="Chertkov O."/>
            <person name="Dalin E."/>
            <person name="Han C.S."/>
            <person name="Hauser L.J."/>
            <person name="Honchak B.M."/>
            <person name="Karbach L.E."/>
            <person name="Land M.L."/>
            <person name="Lapidus A."/>
            <person name="Larimer F.W."/>
            <person name="Mikhailova N."/>
            <person name="Pitluck S."/>
            <person name="Pierson B.K."/>
            <person name="Blankenship R.E."/>
        </authorList>
    </citation>
    <scope>NUCLEOTIDE SEQUENCE [LARGE SCALE GENOMIC DNA]</scope>
    <source>
        <strain>ATCC 29366 / DSM 635 / J-10-fl</strain>
    </source>
</reference>
<keyword id="KW-0066">ATP synthesis</keyword>
<keyword id="KW-1003">Cell membrane</keyword>
<keyword id="KW-0138">CF(0)</keyword>
<keyword id="KW-0375">Hydrogen ion transport</keyword>
<keyword id="KW-0406">Ion transport</keyword>
<keyword id="KW-0472">Membrane</keyword>
<keyword id="KW-1185">Reference proteome</keyword>
<keyword id="KW-0812">Transmembrane</keyword>
<keyword id="KW-1133">Transmembrane helix</keyword>
<keyword id="KW-0813">Transport</keyword>
<organism>
    <name type="scientific">Chloroflexus aurantiacus (strain ATCC 29366 / DSM 635 / J-10-fl)</name>
    <dbReference type="NCBI Taxonomy" id="324602"/>
    <lineage>
        <taxon>Bacteria</taxon>
        <taxon>Bacillati</taxon>
        <taxon>Chloroflexota</taxon>
        <taxon>Chloroflexia</taxon>
        <taxon>Chloroflexales</taxon>
        <taxon>Chloroflexineae</taxon>
        <taxon>Chloroflexaceae</taxon>
        <taxon>Chloroflexus</taxon>
    </lineage>
</organism>
<gene>
    <name evidence="2" type="primary">atpF</name>
    <name type="ordered locus">Caur_3045</name>
</gene>
<comment type="function">
    <text evidence="2">F(1)F(0) ATP synthase produces ATP from ADP in the presence of a proton or sodium gradient. F-type ATPases consist of two structural domains, F(1) containing the extramembraneous catalytic core and F(0) containing the membrane proton channel, linked together by a central stalk and a peripheral stalk. During catalysis, ATP synthesis in the catalytic domain of F(1) is coupled via a rotary mechanism of the central stalk subunits to proton translocation.</text>
</comment>
<comment type="function">
    <text evidence="2">Component of the F(0) channel, it forms part of the peripheral stalk, linking F(1) to F(0).</text>
</comment>
<comment type="subunit">
    <text evidence="1">F-type ATPases have 2 components, F(1) - the catalytic core - and F(0) - the membrane proton channel. F(1) has five subunits: alpha(3), beta(3), gamma(1), delta(1), epsilon(1). F(0) has four main subunits: a(1), b(2) and c(10-14). The alpha and beta chains form an alternating ring which encloses part of the gamma chain. F(1) is attached to F(0) by a central stalk formed by the gamma and epsilon chains, while a peripheral stalk is formed by the delta and b chains (By similarity).</text>
</comment>
<comment type="subcellular location">
    <subcellularLocation>
        <location evidence="2">Cell membrane</location>
        <topology evidence="2">Single-pass membrane protein</topology>
    </subcellularLocation>
</comment>
<comment type="similarity">
    <text evidence="2">Belongs to the ATPase B chain family.</text>
</comment>
<proteinExistence type="inferred from homology"/>
<accession>A9WGS8</accession>
<dbReference type="EMBL" id="CP000909">
    <property type="protein sequence ID" value="ABY36244.1"/>
    <property type="molecule type" value="Genomic_DNA"/>
</dbReference>
<dbReference type="RefSeq" id="WP_012258897.1">
    <property type="nucleotide sequence ID" value="NC_010175.1"/>
</dbReference>
<dbReference type="RefSeq" id="YP_001636633.1">
    <property type="nucleotide sequence ID" value="NC_010175.1"/>
</dbReference>
<dbReference type="SMR" id="A9WGS8"/>
<dbReference type="STRING" id="324602.Caur_3045"/>
<dbReference type="EnsemblBacteria" id="ABY36244">
    <property type="protein sequence ID" value="ABY36244"/>
    <property type="gene ID" value="Caur_3045"/>
</dbReference>
<dbReference type="KEGG" id="cau:Caur_3045"/>
<dbReference type="PATRIC" id="fig|324602.8.peg.3446"/>
<dbReference type="eggNOG" id="COG0711">
    <property type="taxonomic scope" value="Bacteria"/>
</dbReference>
<dbReference type="HOGENOM" id="CLU_079215_4_4_0"/>
<dbReference type="InParanoid" id="A9WGS8"/>
<dbReference type="Proteomes" id="UP000002008">
    <property type="component" value="Chromosome"/>
</dbReference>
<dbReference type="GO" id="GO:0005886">
    <property type="term" value="C:plasma membrane"/>
    <property type="evidence" value="ECO:0007669"/>
    <property type="project" value="UniProtKB-SubCell"/>
</dbReference>
<dbReference type="GO" id="GO:0045259">
    <property type="term" value="C:proton-transporting ATP synthase complex"/>
    <property type="evidence" value="ECO:0007669"/>
    <property type="project" value="UniProtKB-KW"/>
</dbReference>
<dbReference type="GO" id="GO:0046933">
    <property type="term" value="F:proton-transporting ATP synthase activity, rotational mechanism"/>
    <property type="evidence" value="ECO:0007669"/>
    <property type="project" value="UniProtKB-UniRule"/>
</dbReference>
<dbReference type="CDD" id="cd06503">
    <property type="entry name" value="ATP-synt_Fo_b"/>
    <property type="match status" value="1"/>
</dbReference>
<dbReference type="Gene3D" id="6.10.250.1580">
    <property type="match status" value="1"/>
</dbReference>
<dbReference type="Gene3D" id="1.20.5.620">
    <property type="entry name" value="F1F0 ATP synthase subunit B, membrane domain"/>
    <property type="match status" value="1"/>
</dbReference>
<dbReference type="HAMAP" id="MF_01398">
    <property type="entry name" value="ATP_synth_b_bprime"/>
    <property type="match status" value="1"/>
</dbReference>
<dbReference type="InterPro" id="IPR028987">
    <property type="entry name" value="ATP_synth_B-like_membr_sf"/>
</dbReference>
<dbReference type="InterPro" id="IPR002146">
    <property type="entry name" value="ATP_synth_b/b'su_bac/chlpt"/>
</dbReference>
<dbReference type="InterPro" id="IPR005864">
    <property type="entry name" value="ATP_synth_F0_bsu_bac"/>
</dbReference>
<dbReference type="InterPro" id="IPR050059">
    <property type="entry name" value="ATP_synthase_B_chain"/>
</dbReference>
<dbReference type="NCBIfam" id="TIGR01144">
    <property type="entry name" value="ATP_synt_b"/>
    <property type="match status" value="1"/>
</dbReference>
<dbReference type="NCBIfam" id="NF011043">
    <property type="entry name" value="PRK14473.1"/>
    <property type="match status" value="1"/>
</dbReference>
<dbReference type="PANTHER" id="PTHR33445:SF1">
    <property type="entry name" value="ATP SYNTHASE SUBUNIT B"/>
    <property type="match status" value="1"/>
</dbReference>
<dbReference type="PANTHER" id="PTHR33445">
    <property type="entry name" value="ATP SYNTHASE SUBUNIT B', CHLOROPLASTIC"/>
    <property type="match status" value="1"/>
</dbReference>
<dbReference type="Pfam" id="PF00430">
    <property type="entry name" value="ATP-synt_B"/>
    <property type="match status" value="1"/>
</dbReference>
<dbReference type="SUPFAM" id="SSF81573">
    <property type="entry name" value="F1F0 ATP synthase subunit B, membrane domain"/>
    <property type="match status" value="1"/>
</dbReference>
<feature type="chain" id="PRO_0000368413" description="ATP synthase subunit b">
    <location>
        <begin position="1"/>
        <end position="164"/>
    </location>
</feature>
<feature type="transmembrane region" description="Helical" evidence="2">
    <location>
        <begin position="4"/>
        <end position="24"/>
    </location>
</feature>
<protein>
    <recommendedName>
        <fullName evidence="2">ATP synthase subunit b</fullName>
    </recommendedName>
    <alternativeName>
        <fullName evidence="2">ATP synthase F(0) sector subunit b</fullName>
    </alternativeName>
    <alternativeName>
        <fullName evidence="2">ATPase subunit I</fullName>
    </alternativeName>
    <alternativeName>
        <fullName evidence="2">F-type ATPase subunit b</fullName>
        <shortName evidence="2">F-ATPase subunit b</shortName>
    </alternativeName>
</protein>